<proteinExistence type="inferred from homology"/>
<name>RF2_PSECP</name>
<keyword id="KW-0963">Cytoplasm</keyword>
<keyword id="KW-0488">Methylation</keyword>
<keyword id="KW-0648">Protein biosynthesis</keyword>
<feature type="chain" id="PRO_1000193546" description="Peptide chain release factor 2">
    <location>
        <begin position="1"/>
        <end position="371"/>
    </location>
</feature>
<feature type="modified residue" description="N5-methylglutamine" evidence="1">
    <location>
        <position position="251"/>
    </location>
</feature>
<reference key="1">
    <citation type="submission" date="2009-01" db="EMBL/GenBank/DDBJ databases">
        <title>Complete sequence of chromosome of Arthrobacter chlorophenolicus A6.</title>
        <authorList>
            <consortium name="US DOE Joint Genome Institute"/>
            <person name="Lucas S."/>
            <person name="Copeland A."/>
            <person name="Lapidus A."/>
            <person name="Glavina del Rio T."/>
            <person name="Tice H."/>
            <person name="Bruce D."/>
            <person name="Goodwin L."/>
            <person name="Pitluck S."/>
            <person name="Goltsman E."/>
            <person name="Clum A."/>
            <person name="Larimer F."/>
            <person name="Land M."/>
            <person name="Hauser L."/>
            <person name="Kyrpides N."/>
            <person name="Mikhailova N."/>
            <person name="Jansson J."/>
            <person name="Richardson P."/>
        </authorList>
    </citation>
    <scope>NUCLEOTIDE SEQUENCE [LARGE SCALE GENOMIC DNA]</scope>
    <source>
        <strain>ATCC 700700 / DSM 12829 / CIP 107037 / JCM 12360 / KCTC 9906 / NCIMB 13794 / A6</strain>
    </source>
</reference>
<comment type="function">
    <text evidence="1">Peptide chain release factor 2 directs the termination of translation in response to the peptide chain termination codons UGA and UAA.</text>
</comment>
<comment type="subcellular location">
    <subcellularLocation>
        <location evidence="1">Cytoplasm</location>
    </subcellularLocation>
</comment>
<comment type="PTM">
    <text evidence="1">Methylated by PrmC. Methylation increases the termination efficiency of RF2.</text>
</comment>
<comment type="similarity">
    <text evidence="1">Belongs to the prokaryotic/mitochondrial release factor family.</text>
</comment>
<evidence type="ECO:0000255" key="1">
    <source>
        <dbReference type="HAMAP-Rule" id="MF_00094"/>
    </source>
</evidence>
<dbReference type="EMBL" id="CP001341">
    <property type="protein sequence ID" value="ACL40366.1"/>
    <property type="molecule type" value="Genomic_DNA"/>
</dbReference>
<dbReference type="RefSeq" id="WP_015937578.1">
    <property type="nucleotide sequence ID" value="NC_011886.1"/>
</dbReference>
<dbReference type="SMR" id="B8HBH8"/>
<dbReference type="STRING" id="452863.Achl_2401"/>
<dbReference type="KEGG" id="ach:Achl_2401"/>
<dbReference type="eggNOG" id="COG1186">
    <property type="taxonomic scope" value="Bacteria"/>
</dbReference>
<dbReference type="HOGENOM" id="CLU_036856_6_0_11"/>
<dbReference type="OrthoDB" id="9806673at2"/>
<dbReference type="Proteomes" id="UP000002505">
    <property type="component" value="Chromosome"/>
</dbReference>
<dbReference type="GO" id="GO:0005737">
    <property type="term" value="C:cytoplasm"/>
    <property type="evidence" value="ECO:0007669"/>
    <property type="project" value="UniProtKB-SubCell"/>
</dbReference>
<dbReference type="GO" id="GO:0016149">
    <property type="term" value="F:translation release factor activity, codon specific"/>
    <property type="evidence" value="ECO:0007669"/>
    <property type="project" value="UniProtKB-UniRule"/>
</dbReference>
<dbReference type="FunFam" id="3.30.160.20:FF:000004">
    <property type="entry name" value="Peptide chain release factor 1"/>
    <property type="match status" value="1"/>
</dbReference>
<dbReference type="Gene3D" id="3.30.160.20">
    <property type="match status" value="1"/>
</dbReference>
<dbReference type="Gene3D" id="3.30.70.1660">
    <property type="match status" value="1"/>
</dbReference>
<dbReference type="Gene3D" id="1.20.58.410">
    <property type="entry name" value="Release factor"/>
    <property type="match status" value="1"/>
</dbReference>
<dbReference type="HAMAP" id="MF_00094">
    <property type="entry name" value="Rel_fac_2"/>
    <property type="match status" value="1"/>
</dbReference>
<dbReference type="InterPro" id="IPR005139">
    <property type="entry name" value="PCRF"/>
</dbReference>
<dbReference type="InterPro" id="IPR000352">
    <property type="entry name" value="Pep_chain_release_fac_I"/>
</dbReference>
<dbReference type="InterPro" id="IPR045853">
    <property type="entry name" value="Pep_chain_release_fac_I_sf"/>
</dbReference>
<dbReference type="InterPro" id="IPR004374">
    <property type="entry name" value="PrfB"/>
</dbReference>
<dbReference type="NCBIfam" id="TIGR00020">
    <property type="entry name" value="prfB"/>
    <property type="match status" value="1"/>
</dbReference>
<dbReference type="PANTHER" id="PTHR43116:SF3">
    <property type="entry name" value="CLASS I PEPTIDE CHAIN RELEASE FACTOR"/>
    <property type="match status" value="1"/>
</dbReference>
<dbReference type="PANTHER" id="PTHR43116">
    <property type="entry name" value="PEPTIDE CHAIN RELEASE FACTOR 2"/>
    <property type="match status" value="1"/>
</dbReference>
<dbReference type="Pfam" id="PF03462">
    <property type="entry name" value="PCRF"/>
    <property type="match status" value="1"/>
</dbReference>
<dbReference type="Pfam" id="PF00472">
    <property type="entry name" value="RF-1"/>
    <property type="match status" value="1"/>
</dbReference>
<dbReference type="SMART" id="SM00937">
    <property type="entry name" value="PCRF"/>
    <property type="match status" value="1"/>
</dbReference>
<dbReference type="SUPFAM" id="SSF75620">
    <property type="entry name" value="Release factor"/>
    <property type="match status" value="1"/>
</dbReference>
<dbReference type="PROSITE" id="PS00745">
    <property type="entry name" value="RF_PROK_I"/>
    <property type="match status" value="1"/>
</dbReference>
<accession>B8HBH8</accession>
<protein>
    <recommendedName>
        <fullName evidence="1">Peptide chain release factor 2</fullName>
        <shortName evidence="1">RF-2</shortName>
    </recommendedName>
</protein>
<sequence>MANIDFSAEIRALRATYESIERVTDMEALREDIAELSERAGEPDLWDDPAAAQKITSRLSHRQSELERLTTLASRIDDLEVLVELGQDEGDADSMGEAAAELESIQKALKNLEVVTLLSGEYDEREAVVSIRAGAGGVDAADFAEMLMRMYLRWAERHGYPTTVMDTSYAEEAGLKSATFEVKAPYAFGTLSVEAGTHRLVRISPFDNQGRRQTSFAAVEVIPLIEQTDSIDIPDNEIRVDVFRSSGPGGQSVNTTDSAVRLTHIPTGVVVSMQNEKSQLQNRAAAMRVLQSRLLLLKKEQEDAEKKALAGDVKASWGDQMRSYVLNPYQMVKDLRTEHEVGNTSAVFDGEIDDFIDAGIRWRTDNRNAEK</sequence>
<gene>
    <name evidence="1" type="primary">prfB</name>
    <name type="ordered locus">Achl_2401</name>
</gene>
<organism>
    <name type="scientific">Pseudarthrobacter chlorophenolicus (strain ATCC 700700 / DSM 12829 / CIP 107037 / JCM 12360 / KCTC 9906 / NCIMB 13794 / A6)</name>
    <name type="common">Arthrobacter chlorophenolicus</name>
    <dbReference type="NCBI Taxonomy" id="452863"/>
    <lineage>
        <taxon>Bacteria</taxon>
        <taxon>Bacillati</taxon>
        <taxon>Actinomycetota</taxon>
        <taxon>Actinomycetes</taxon>
        <taxon>Micrococcales</taxon>
        <taxon>Micrococcaceae</taxon>
        <taxon>Pseudarthrobacter</taxon>
    </lineage>
</organism>